<protein>
    <recommendedName>
        <fullName evidence="1">Ureidoglycolate dehydrogenase (NAD(+))</fullName>
        <ecNumber evidence="1">1.1.1.350</ecNumber>
    </recommendedName>
</protein>
<reference key="1">
    <citation type="journal article" date="2001" name="Nature">
        <title>Genome sequence of enterohaemorrhagic Escherichia coli O157:H7.</title>
        <authorList>
            <person name="Perna N.T."/>
            <person name="Plunkett G. III"/>
            <person name="Burland V."/>
            <person name="Mau B."/>
            <person name="Glasner J.D."/>
            <person name="Rose D.J."/>
            <person name="Mayhew G.F."/>
            <person name="Evans P.S."/>
            <person name="Gregor J."/>
            <person name="Kirkpatrick H.A."/>
            <person name="Posfai G."/>
            <person name="Hackett J."/>
            <person name="Klink S."/>
            <person name="Boutin A."/>
            <person name="Shao Y."/>
            <person name="Miller L."/>
            <person name="Grotbeck E.J."/>
            <person name="Davis N.W."/>
            <person name="Lim A."/>
            <person name="Dimalanta E.T."/>
            <person name="Potamousis K."/>
            <person name="Apodaca J."/>
            <person name="Anantharaman T.S."/>
            <person name="Lin J."/>
            <person name="Yen G."/>
            <person name="Schwartz D.C."/>
            <person name="Welch R.A."/>
            <person name="Blattner F.R."/>
        </authorList>
    </citation>
    <scope>NUCLEOTIDE SEQUENCE [LARGE SCALE GENOMIC DNA]</scope>
    <source>
        <strain>O157:H7 / EDL933 / ATCC 700927 / EHEC</strain>
    </source>
</reference>
<reference key="2">
    <citation type="journal article" date="2001" name="DNA Res.">
        <title>Complete genome sequence of enterohemorrhagic Escherichia coli O157:H7 and genomic comparison with a laboratory strain K-12.</title>
        <authorList>
            <person name="Hayashi T."/>
            <person name="Makino K."/>
            <person name="Ohnishi M."/>
            <person name="Kurokawa K."/>
            <person name="Ishii K."/>
            <person name="Yokoyama K."/>
            <person name="Han C.-G."/>
            <person name="Ohtsubo E."/>
            <person name="Nakayama K."/>
            <person name="Murata T."/>
            <person name="Tanaka M."/>
            <person name="Tobe T."/>
            <person name="Iida T."/>
            <person name="Takami H."/>
            <person name="Honda T."/>
            <person name="Sasakawa C."/>
            <person name="Ogasawara N."/>
            <person name="Yasunaga T."/>
            <person name="Kuhara S."/>
            <person name="Shiba T."/>
            <person name="Hattori M."/>
            <person name="Shinagawa H."/>
        </authorList>
    </citation>
    <scope>NUCLEOTIDE SEQUENCE [LARGE SCALE GENOMIC DNA]</scope>
    <source>
        <strain>O157:H7 / Sakai / RIMD 0509952 / EHEC</strain>
    </source>
</reference>
<accession>P58408</accession>
<organism>
    <name type="scientific">Escherichia coli O157:H7</name>
    <dbReference type="NCBI Taxonomy" id="83334"/>
    <lineage>
        <taxon>Bacteria</taxon>
        <taxon>Pseudomonadati</taxon>
        <taxon>Pseudomonadota</taxon>
        <taxon>Gammaproteobacteria</taxon>
        <taxon>Enterobacterales</taxon>
        <taxon>Enterobacteriaceae</taxon>
        <taxon>Escherichia</taxon>
    </lineage>
</organism>
<name>ALLD_ECO57</name>
<proteinExistence type="inferred from homology"/>
<keyword id="KW-0963">Cytoplasm</keyword>
<keyword id="KW-0520">NAD</keyword>
<keyword id="KW-0560">Oxidoreductase</keyword>
<keyword id="KW-0659">Purine metabolism</keyword>
<keyword id="KW-1185">Reference proteome</keyword>
<sequence>MKISRETLHQLIENKLCQAGLKREHAATVAEVLVYADARGIHSHGAVRVEYYAERISKGGTNREPEFRLEETGPCSAILHADNAAGQVAAKMGMEHAIKTAQQNGVAVVGISRMGHSGAISYFVQQAARAGLIGISMCQSDPMVVPFGGAEIYYGTNPLAFAAPGEGDEILTFDMATTVQAWGKVLDARSRNMSIPDTWAVDKNGAPTTDPFAVHALLPAAGPKGYGLMMMIDVLSGVLLGLPFGRQVSSMYDDLHAGRNLGQLHVVINPNFFSSSELFRQHLSQTMRELNAITPAPGFNQVYYPGQDQDIKQRQAAVEGIEIVDDIYQYLISDALYNTSYETKNPFAQ</sequence>
<gene>
    <name evidence="1" type="primary">allD</name>
    <name type="synonym">glxB8</name>
    <name type="ordered locus">Z0672</name>
    <name type="ordered locus">ECs0579</name>
</gene>
<dbReference type="EC" id="1.1.1.350" evidence="1"/>
<dbReference type="EMBL" id="AE005174">
    <property type="protein sequence ID" value="AAG54874.1"/>
    <property type="molecule type" value="Genomic_DNA"/>
</dbReference>
<dbReference type="EMBL" id="BA000007">
    <property type="protein sequence ID" value="BAB34002.1"/>
    <property type="molecule type" value="Genomic_DNA"/>
</dbReference>
<dbReference type="PIR" id="C90701">
    <property type="entry name" value="C90701"/>
</dbReference>
<dbReference type="PIR" id="F85551">
    <property type="entry name" value="F85551"/>
</dbReference>
<dbReference type="RefSeq" id="NP_308606.1">
    <property type="nucleotide sequence ID" value="NC_002695.1"/>
</dbReference>
<dbReference type="RefSeq" id="WP_000703914.1">
    <property type="nucleotide sequence ID" value="NZ_VOAI01000030.1"/>
</dbReference>
<dbReference type="SMR" id="P58408"/>
<dbReference type="STRING" id="155864.Z0672"/>
<dbReference type="GeneID" id="916572"/>
<dbReference type="KEGG" id="ece:Z0672"/>
<dbReference type="KEGG" id="ecs:ECs_0579"/>
<dbReference type="PATRIC" id="fig|386585.9.peg.686"/>
<dbReference type="eggNOG" id="COG2055">
    <property type="taxonomic scope" value="Bacteria"/>
</dbReference>
<dbReference type="HOGENOM" id="CLU_040452_3_1_6"/>
<dbReference type="OMA" id="TNTEPAM"/>
<dbReference type="UniPathway" id="UPA00395">
    <property type="reaction ID" value="UER00657"/>
</dbReference>
<dbReference type="Proteomes" id="UP000000558">
    <property type="component" value="Chromosome"/>
</dbReference>
<dbReference type="Proteomes" id="UP000002519">
    <property type="component" value="Chromosome"/>
</dbReference>
<dbReference type="GO" id="GO:0005737">
    <property type="term" value="C:cytoplasm"/>
    <property type="evidence" value="ECO:0007669"/>
    <property type="project" value="UniProtKB-SubCell"/>
</dbReference>
<dbReference type="GO" id="GO:0016491">
    <property type="term" value="F:oxidoreductase activity"/>
    <property type="evidence" value="ECO:0007669"/>
    <property type="project" value="UniProtKB-KW"/>
</dbReference>
<dbReference type="GO" id="GO:0000256">
    <property type="term" value="P:allantoin catabolic process"/>
    <property type="evidence" value="ECO:0007669"/>
    <property type="project" value="UniProtKB-UniPathway"/>
</dbReference>
<dbReference type="GO" id="GO:0006144">
    <property type="term" value="P:purine nucleobase metabolic process"/>
    <property type="evidence" value="ECO:0007669"/>
    <property type="project" value="UniProtKB-KW"/>
</dbReference>
<dbReference type="Gene3D" id="1.10.1530.10">
    <property type="match status" value="1"/>
</dbReference>
<dbReference type="Gene3D" id="3.30.1370.60">
    <property type="entry name" value="Hypothetical oxidoreductase yiak, domain 2"/>
    <property type="match status" value="1"/>
</dbReference>
<dbReference type="InterPro" id="IPR043144">
    <property type="entry name" value="Mal/L-sulf/L-lact_DH-like_ah"/>
</dbReference>
<dbReference type="InterPro" id="IPR043143">
    <property type="entry name" value="Mal/L-sulf/L-lact_DH-like_NADP"/>
</dbReference>
<dbReference type="InterPro" id="IPR036111">
    <property type="entry name" value="Mal/L-sulfo/L-lacto_DH-like_sf"/>
</dbReference>
<dbReference type="InterPro" id="IPR003767">
    <property type="entry name" value="Malate/L-lactate_DH-like"/>
</dbReference>
<dbReference type="InterPro" id="IPR017590">
    <property type="entry name" value="Ureidoglycolate_dehydrogenase"/>
</dbReference>
<dbReference type="NCBIfam" id="TIGR03175">
    <property type="entry name" value="AllD"/>
    <property type="match status" value="1"/>
</dbReference>
<dbReference type="NCBIfam" id="NF011599">
    <property type="entry name" value="PRK15025.1"/>
    <property type="match status" value="1"/>
</dbReference>
<dbReference type="PANTHER" id="PTHR11091:SF0">
    <property type="entry name" value="MALATE DEHYDROGENASE"/>
    <property type="match status" value="1"/>
</dbReference>
<dbReference type="PANTHER" id="PTHR11091">
    <property type="entry name" value="OXIDOREDUCTASE-RELATED"/>
    <property type="match status" value="1"/>
</dbReference>
<dbReference type="Pfam" id="PF02615">
    <property type="entry name" value="Ldh_2"/>
    <property type="match status" value="1"/>
</dbReference>
<dbReference type="SUPFAM" id="SSF89733">
    <property type="entry name" value="L-sulfolactate dehydrogenase-like"/>
    <property type="match status" value="1"/>
</dbReference>
<evidence type="ECO:0000250" key="1">
    <source>
        <dbReference type="UniProtKB" id="P77555"/>
    </source>
</evidence>
<comment type="function">
    <text evidence="1">AllD plays a pivotal role as a metabolic branch-point enzyme in nitrogen utilization via the assimilation of allantoin. It is able to utilize allantoin as a sole source of nitrogen under anaerobic conditions. Catalyzes the oxidation of ureidoglycolate to oxalurate.</text>
</comment>
<comment type="catalytic activity">
    <reaction evidence="1">
        <text>(S)-ureidoglycolate + NAD(+) = N-carbamoyl-2-oxoglycine + NADH + H(+)</text>
        <dbReference type="Rhea" id="RHEA:15329"/>
        <dbReference type="ChEBI" id="CHEBI:15378"/>
        <dbReference type="ChEBI" id="CHEBI:57296"/>
        <dbReference type="ChEBI" id="CHEBI:57540"/>
        <dbReference type="ChEBI" id="CHEBI:57824"/>
        <dbReference type="ChEBI" id="CHEBI:57945"/>
        <dbReference type="EC" id="1.1.1.350"/>
    </reaction>
</comment>
<comment type="pathway">
    <text evidence="1">Nitrogen metabolism; (S)-allantoin degradation; oxalurate from (S)-ureidoglycolate: step 1/1.</text>
</comment>
<comment type="subunit">
    <text evidence="1">Homodimer.</text>
</comment>
<comment type="subcellular location">
    <subcellularLocation>
        <location evidence="1">Cytoplasm</location>
    </subcellularLocation>
</comment>
<comment type="induction">
    <text evidence="1">By glyoxylate and allantoin under anaerobic conditions.</text>
</comment>
<comment type="similarity">
    <text evidence="1">Belongs to the LDH2/MDH2 oxidoreductase family.</text>
</comment>
<feature type="chain" id="PRO_0000083823" description="Ureidoglycolate dehydrogenase (NAD(+))">
    <location>
        <begin position="1"/>
        <end position="349"/>
    </location>
</feature>
<feature type="active site" description="Proton acceptor" evidence="1">
    <location>
        <position position="116"/>
    </location>
</feature>
<feature type="binding site" evidence="1">
    <location>
        <position position="140"/>
    </location>
    <ligand>
        <name>NAD(+)</name>
        <dbReference type="ChEBI" id="CHEBI:57540"/>
    </ligand>
</feature>
<feature type="binding site" evidence="1">
    <location>
        <begin position="174"/>
        <end position="176"/>
    </location>
    <ligand>
        <name>NAD(+)</name>
        <dbReference type="ChEBI" id="CHEBI:57540"/>
    </ligand>
</feature>
<feature type="binding site" evidence="1">
    <location>
        <position position="224"/>
    </location>
    <ligand>
        <name>NAD(+)</name>
        <dbReference type="ChEBI" id="CHEBI:57540"/>
    </ligand>
</feature>
<feature type="binding site" evidence="1">
    <location>
        <begin position="306"/>
        <end position="308"/>
    </location>
    <ligand>
        <name>NAD(+)</name>
        <dbReference type="ChEBI" id="CHEBI:57540"/>
    </ligand>
</feature>
<feature type="site" description="Plays a crucial role in stabilizing the binding of (S)-ureidoglycolate" evidence="1">
    <location>
        <position position="48"/>
    </location>
</feature>